<gene>
    <name type="primary">CYCD3-2</name>
    <name type="ordered locus">Os09g0111100</name>
    <name type="ordered locus">LOC_Os09g02360</name>
    <name type="ORF">OsJ_027234</name>
</gene>
<protein>
    <recommendedName>
        <fullName>Cyclin-D3-2</fullName>
    </recommendedName>
    <alternativeName>
        <fullName>G1/S-specific cyclin-D3-2</fullName>
        <shortName>CycD3;2</shortName>
    </alternativeName>
</protein>
<sequence>MAFATLFDSLYCPEEHLDLFHDTAADDDLHLDLHLHQPPPPPPLLDDDLPALFHALRGKEDPLRPAADDDGYGGVSAREAAVGWALRAVARLGFSALTAALAVAYLDRCFLGGALRLGDRPWMARLAAVACVALAAKVEETRVPVLLDLQLCAAERADPNEAYVFEDKTVRRMELLVLSALGWRMHPVTPLSYLQPLLGTAHAARLHHCDTALLALMPDWRWPRHRPSAWAAAALLATAGWCGGGGGDDAELLALIDAPKDEMAECAKIISEEAAAAAAGGIVIGGENKRKGAAGLYSAPASPSGVIGASACFSCDSSSSSVDSLFAALEPPGRPIKRGAAAATTADPLPADEESRDAWPPYAA</sequence>
<organism>
    <name type="scientific">Oryza sativa subsp. japonica</name>
    <name type="common">Rice</name>
    <dbReference type="NCBI Taxonomy" id="39947"/>
    <lineage>
        <taxon>Eukaryota</taxon>
        <taxon>Viridiplantae</taxon>
        <taxon>Streptophyta</taxon>
        <taxon>Embryophyta</taxon>
        <taxon>Tracheophyta</taxon>
        <taxon>Spermatophyta</taxon>
        <taxon>Magnoliopsida</taxon>
        <taxon>Liliopsida</taxon>
        <taxon>Poales</taxon>
        <taxon>Poaceae</taxon>
        <taxon>BOP clade</taxon>
        <taxon>Oryzoideae</taxon>
        <taxon>Oryzeae</taxon>
        <taxon>Oryzinae</taxon>
        <taxon>Oryza</taxon>
        <taxon>Oryza sativa</taxon>
    </lineage>
</organism>
<reference key="1">
    <citation type="journal article" date="2005" name="Nature">
        <title>The map-based sequence of the rice genome.</title>
        <authorList>
            <consortium name="International rice genome sequencing project (IRGSP)"/>
        </authorList>
    </citation>
    <scope>NUCLEOTIDE SEQUENCE [LARGE SCALE GENOMIC DNA]</scope>
    <source>
        <strain>cv. Nipponbare</strain>
    </source>
</reference>
<reference key="2">
    <citation type="journal article" date="2008" name="Nucleic Acids Res.">
        <title>The rice annotation project database (RAP-DB): 2008 update.</title>
        <authorList>
            <consortium name="The rice annotation project (RAP)"/>
        </authorList>
    </citation>
    <scope>GENOME REANNOTATION</scope>
    <source>
        <strain>cv. Nipponbare</strain>
    </source>
</reference>
<reference key="3">
    <citation type="journal article" date="2013" name="Rice">
        <title>Improvement of the Oryza sativa Nipponbare reference genome using next generation sequence and optical map data.</title>
        <authorList>
            <person name="Kawahara Y."/>
            <person name="de la Bastide M."/>
            <person name="Hamilton J.P."/>
            <person name="Kanamori H."/>
            <person name="McCombie W.R."/>
            <person name="Ouyang S."/>
            <person name="Schwartz D.C."/>
            <person name="Tanaka T."/>
            <person name="Wu J."/>
            <person name="Zhou S."/>
            <person name="Childs K.L."/>
            <person name="Davidson R.M."/>
            <person name="Lin H."/>
            <person name="Quesada-Ocampo L."/>
            <person name="Vaillancourt B."/>
            <person name="Sakai H."/>
            <person name="Lee S.S."/>
            <person name="Kim J."/>
            <person name="Numa H."/>
            <person name="Itoh T."/>
            <person name="Buell C.R."/>
            <person name="Matsumoto T."/>
        </authorList>
    </citation>
    <scope>GENOME REANNOTATION</scope>
    <source>
        <strain>cv. Nipponbare</strain>
    </source>
</reference>
<reference key="4">
    <citation type="journal article" date="2005" name="PLoS Biol.">
        <title>The genomes of Oryza sativa: a history of duplications.</title>
        <authorList>
            <person name="Yu J."/>
            <person name="Wang J."/>
            <person name="Lin W."/>
            <person name="Li S."/>
            <person name="Li H."/>
            <person name="Zhou J."/>
            <person name="Ni P."/>
            <person name="Dong W."/>
            <person name="Hu S."/>
            <person name="Zeng C."/>
            <person name="Zhang J."/>
            <person name="Zhang Y."/>
            <person name="Li R."/>
            <person name="Xu Z."/>
            <person name="Li S."/>
            <person name="Li X."/>
            <person name="Zheng H."/>
            <person name="Cong L."/>
            <person name="Lin L."/>
            <person name="Yin J."/>
            <person name="Geng J."/>
            <person name="Li G."/>
            <person name="Shi J."/>
            <person name="Liu J."/>
            <person name="Lv H."/>
            <person name="Li J."/>
            <person name="Wang J."/>
            <person name="Deng Y."/>
            <person name="Ran L."/>
            <person name="Shi X."/>
            <person name="Wang X."/>
            <person name="Wu Q."/>
            <person name="Li C."/>
            <person name="Ren X."/>
            <person name="Wang J."/>
            <person name="Wang X."/>
            <person name="Li D."/>
            <person name="Liu D."/>
            <person name="Zhang X."/>
            <person name="Ji Z."/>
            <person name="Zhao W."/>
            <person name="Sun Y."/>
            <person name="Zhang Z."/>
            <person name="Bao J."/>
            <person name="Han Y."/>
            <person name="Dong L."/>
            <person name="Ji J."/>
            <person name="Chen P."/>
            <person name="Wu S."/>
            <person name="Liu J."/>
            <person name="Xiao Y."/>
            <person name="Bu D."/>
            <person name="Tan J."/>
            <person name="Yang L."/>
            <person name="Ye C."/>
            <person name="Zhang J."/>
            <person name="Xu J."/>
            <person name="Zhou Y."/>
            <person name="Yu Y."/>
            <person name="Zhang B."/>
            <person name="Zhuang S."/>
            <person name="Wei H."/>
            <person name="Liu B."/>
            <person name="Lei M."/>
            <person name="Yu H."/>
            <person name="Li Y."/>
            <person name="Xu H."/>
            <person name="Wei S."/>
            <person name="He X."/>
            <person name="Fang L."/>
            <person name="Zhang Z."/>
            <person name="Zhang Y."/>
            <person name="Huang X."/>
            <person name="Su Z."/>
            <person name="Tong W."/>
            <person name="Li J."/>
            <person name="Tong Z."/>
            <person name="Li S."/>
            <person name="Ye J."/>
            <person name="Wang L."/>
            <person name="Fang L."/>
            <person name="Lei T."/>
            <person name="Chen C.-S."/>
            <person name="Chen H.-C."/>
            <person name="Xu Z."/>
            <person name="Li H."/>
            <person name="Huang H."/>
            <person name="Zhang F."/>
            <person name="Xu H."/>
            <person name="Li N."/>
            <person name="Zhao C."/>
            <person name="Li S."/>
            <person name="Dong L."/>
            <person name="Huang Y."/>
            <person name="Li L."/>
            <person name="Xi Y."/>
            <person name="Qi Q."/>
            <person name="Li W."/>
            <person name="Zhang B."/>
            <person name="Hu W."/>
            <person name="Zhang Y."/>
            <person name="Tian X."/>
            <person name="Jiao Y."/>
            <person name="Liang X."/>
            <person name="Jin J."/>
            <person name="Gao L."/>
            <person name="Zheng W."/>
            <person name="Hao B."/>
            <person name="Liu S.-M."/>
            <person name="Wang W."/>
            <person name="Yuan L."/>
            <person name="Cao M."/>
            <person name="McDermott J."/>
            <person name="Samudrala R."/>
            <person name="Wang J."/>
            <person name="Wong G.K.-S."/>
            <person name="Yang H."/>
        </authorList>
    </citation>
    <scope>NUCLEOTIDE SEQUENCE [LARGE SCALE GENOMIC DNA]</scope>
    <source>
        <strain>cv. Nipponbare</strain>
    </source>
</reference>
<reference key="5">
    <citation type="journal article" date="2003" name="Science">
        <title>Collection, mapping, and annotation of over 28,000 cDNA clones from japonica rice.</title>
        <authorList>
            <consortium name="The rice full-length cDNA consortium"/>
        </authorList>
    </citation>
    <scope>NUCLEOTIDE SEQUENCE [LARGE SCALE MRNA]</scope>
    <source>
        <strain>cv. Nipponbare</strain>
    </source>
</reference>
<reference key="6">
    <citation type="journal article" date="2006" name="Mol. Genet. Genomics">
        <title>Genome-wide analysis of cyclin family in rice (Oryza sativa L.).</title>
        <authorList>
            <person name="La H."/>
            <person name="Li J."/>
            <person name="Ji Z."/>
            <person name="Cheng Y."/>
            <person name="Li X."/>
            <person name="Jiang S."/>
            <person name="Venkatesh P.N."/>
            <person name="Ramachandran S."/>
        </authorList>
    </citation>
    <scope>GENE FAMILY</scope>
    <scope>NOMENCLATURE</scope>
</reference>
<accession>Q0J3H7</accession>
<accession>B7EUR8</accession>
<name>CCD32_ORYSJ</name>
<evidence type="ECO:0000256" key="1">
    <source>
        <dbReference type="SAM" id="MobiDB-lite"/>
    </source>
</evidence>
<evidence type="ECO:0000305" key="2"/>
<dbReference type="EMBL" id="AP008215">
    <property type="protein sequence ID" value="BAF24488.1"/>
    <property type="molecule type" value="Genomic_DNA"/>
</dbReference>
<dbReference type="EMBL" id="AP014965">
    <property type="protein sequence ID" value="BAT06828.1"/>
    <property type="molecule type" value="Genomic_DNA"/>
</dbReference>
<dbReference type="EMBL" id="CM000146">
    <property type="protein sequence ID" value="EAZ43751.1"/>
    <property type="molecule type" value="Genomic_DNA"/>
</dbReference>
<dbReference type="EMBL" id="AK103499">
    <property type="protein sequence ID" value="BAG96115.1"/>
    <property type="molecule type" value="mRNA"/>
</dbReference>
<dbReference type="RefSeq" id="XP_015610990.1">
    <property type="nucleotide sequence ID" value="XM_015755504.1"/>
</dbReference>
<dbReference type="SMR" id="Q0J3H7"/>
<dbReference type="FunCoup" id="Q0J3H7">
    <property type="interactions" value="237"/>
</dbReference>
<dbReference type="STRING" id="39947.Q0J3H7"/>
<dbReference type="PaxDb" id="39947-Q0J3H7"/>
<dbReference type="EnsemblPlants" id="Os09t0111100-01">
    <property type="protein sequence ID" value="Os09t0111100-01"/>
    <property type="gene ID" value="Os09g0111100"/>
</dbReference>
<dbReference type="Gramene" id="Os09t0111100-01">
    <property type="protein sequence ID" value="Os09t0111100-01"/>
    <property type="gene ID" value="Os09g0111100"/>
</dbReference>
<dbReference type="KEGG" id="dosa:Os09g0111100"/>
<dbReference type="eggNOG" id="KOG0656">
    <property type="taxonomic scope" value="Eukaryota"/>
</dbReference>
<dbReference type="HOGENOM" id="CLU_048040_0_1_1"/>
<dbReference type="InParanoid" id="Q0J3H7"/>
<dbReference type="OMA" id="HLDLYHE"/>
<dbReference type="OrthoDB" id="5590282at2759"/>
<dbReference type="PlantReactome" id="R-OSA-9640760">
    <property type="pathway name" value="G1 phase"/>
</dbReference>
<dbReference type="PlantReactome" id="R-OSA-9640887">
    <property type="pathway name" value="G1/S transition"/>
</dbReference>
<dbReference type="Proteomes" id="UP000000763">
    <property type="component" value="Chromosome 9"/>
</dbReference>
<dbReference type="Proteomes" id="UP000007752">
    <property type="component" value="Chromosome 9"/>
</dbReference>
<dbReference type="Proteomes" id="UP000059680">
    <property type="component" value="Chromosome 9"/>
</dbReference>
<dbReference type="GO" id="GO:0000307">
    <property type="term" value="C:cyclin-dependent protein kinase holoenzyme complex"/>
    <property type="evidence" value="ECO:0000318"/>
    <property type="project" value="GO_Central"/>
</dbReference>
<dbReference type="GO" id="GO:0005737">
    <property type="term" value="C:cytoplasm"/>
    <property type="evidence" value="ECO:0000318"/>
    <property type="project" value="GO_Central"/>
</dbReference>
<dbReference type="GO" id="GO:0005634">
    <property type="term" value="C:nucleus"/>
    <property type="evidence" value="ECO:0000318"/>
    <property type="project" value="GO_Central"/>
</dbReference>
<dbReference type="GO" id="GO:0016538">
    <property type="term" value="F:cyclin-dependent protein serine/threonine kinase regulator activity"/>
    <property type="evidence" value="ECO:0000318"/>
    <property type="project" value="GO_Central"/>
</dbReference>
<dbReference type="GO" id="GO:0051301">
    <property type="term" value="P:cell division"/>
    <property type="evidence" value="ECO:0007669"/>
    <property type="project" value="UniProtKB-KW"/>
</dbReference>
<dbReference type="GO" id="GO:0000082">
    <property type="term" value="P:G1/S transition of mitotic cell cycle"/>
    <property type="evidence" value="ECO:0000318"/>
    <property type="project" value="GO_Central"/>
</dbReference>
<dbReference type="FunFam" id="1.10.472.10:FF:000114">
    <property type="entry name" value="Cyclin-D5-1"/>
    <property type="match status" value="1"/>
</dbReference>
<dbReference type="Gene3D" id="1.10.472.10">
    <property type="entry name" value="Cyclin-like"/>
    <property type="match status" value="2"/>
</dbReference>
<dbReference type="InterPro" id="IPR039361">
    <property type="entry name" value="Cyclin"/>
</dbReference>
<dbReference type="InterPro" id="IPR013763">
    <property type="entry name" value="Cyclin-like_dom"/>
</dbReference>
<dbReference type="InterPro" id="IPR036915">
    <property type="entry name" value="Cyclin-like_sf"/>
</dbReference>
<dbReference type="InterPro" id="IPR006671">
    <property type="entry name" value="Cyclin_N"/>
</dbReference>
<dbReference type="PANTHER" id="PTHR10177">
    <property type="entry name" value="CYCLINS"/>
    <property type="match status" value="1"/>
</dbReference>
<dbReference type="Pfam" id="PF00134">
    <property type="entry name" value="Cyclin_N"/>
    <property type="match status" value="1"/>
</dbReference>
<dbReference type="SMART" id="SM00385">
    <property type="entry name" value="CYCLIN"/>
    <property type="match status" value="1"/>
</dbReference>
<dbReference type="SUPFAM" id="SSF47954">
    <property type="entry name" value="Cyclin-like"/>
    <property type="match status" value="1"/>
</dbReference>
<proteinExistence type="evidence at transcript level"/>
<keyword id="KW-0131">Cell cycle</keyword>
<keyword id="KW-0132">Cell division</keyword>
<keyword id="KW-0195">Cyclin</keyword>
<keyword id="KW-1185">Reference proteome</keyword>
<comment type="similarity">
    <text evidence="2">Belongs to the cyclin family. Cyclin D subfamily.</text>
</comment>
<feature type="chain" id="PRO_0000287028" description="Cyclin-D3-2">
    <location>
        <begin position="1"/>
        <end position="364"/>
    </location>
</feature>
<feature type="region of interest" description="Disordered" evidence="1">
    <location>
        <begin position="331"/>
        <end position="364"/>
    </location>
</feature>
<feature type="compositionally biased region" description="Low complexity" evidence="1">
    <location>
        <begin position="340"/>
        <end position="349"/>
    </location>
</feature>